<gene>
    <name type="primary">tlpB</name>
    <name type="ordered locus">BSU31230</name>
</gene>
<accession>P39217</accession>
<protein>
    <recommendedName>
        <fullName>Methyl-accepting chemotaxis protein TlpB</fullName>
    </recommendedName>
</protein>
<feature type="chain" id="PRO_0000110560" description="Methyl-accepting chemotaxis protein TlpB">
    <location>
        <begin position="1"/>
        <end position="662"/>
    </location>
</feature>
<feature type="topological domain" description="Cytoplasmic" evidence="2">
    <location>
        <begin position="1"/>
        <end position="16"/>
    </location>
</feature>
<feature type="transmembrane region" description="Helical" evidence="2">
    <location>
        <begin position="17"/>
        <end position="37"/>
    </location>
</feature>
<feature type="topological domain" description="Extracellular" evidence="2">
    <location>
        <begin position="38"/>
        <end position="281"/>
    </location>
</feature>
<feature type="transmembrane region" description="Helical" evidence="2">
    <location>
        <begin position="282"/>
        <end position="302"/>
    </location>
</feature>
<feature type="topological domain" description="Cytoplasmic" evidence="2">
    <location>
        <begin position="303"/>
        <end position="662"/>
    </location>
</feature>
<feature type="domain" description="Cache">
    <location>
        <begin position="153"/>
        <end position="228"/>
    </location>
</feature>
<feature type="domain" description="HAMP" evidence="3">
    <location>
        <begin position="303"/>
        <end position="355"/>
    </location>
</feature>
<feature type="domain" description="Methyl-accepting transducer" evidence="4">
    <location>
        <begin position="374"/>
        <end position="610"/>
    </location>
</feature>
<feature type="modified residue" description="Glutamate methyl ester (Glu)" evidence="1">
    <location>
        <position position="370"/>
    </location>
</feature>
<feature type="modified residue" description="Glutamate methyl ester (Gln)" evidence="1">
    <location>
        <position position="594"/>
    </location>
</feature>
<feature type="modified residue" description="Glutamate methyl ester (Glu)" evidence="1">
    <location>
        <position position="629"/>
    </location>
</feature>
<feature type="modified residue" description="Glutamate methyl ester (Glu)" evidence="1">
    <location>
        <position position="636"/>
    </location>
</feature>
<dbReference type="EMBL" id="L29189">
    <property type="protein sequence ID" value="AAA20557.1"/>
    <property type="molecule type" value="Genomic_DNA"/>
</dbReference>
<dbReference type="EMBL" id="AL009126">
    <property type="protein sequence ID" value="CAB15101.1"/>
    <property type="molecule type" value="Genomic_DNA"/>
</dbReference>
<dbReference type="PIR" id="D54078">
    <property type="entry name" value="D54078"/>
</dbReference>
<dbReference type="RefSeq" id="NP_391001.1">
    <property type="nucleotide sequence ID" value="NC_000964.3"/>
</dbReference>
<dbReference type="RefSeq" id="WP_003243983.1">
    <property type="nucleotide sequence ID" value="NZ_OZ025638.1"/>
</dbReference>
<dbReference type="SMR" id="P39217"/>
<dbReference type="FunCoup" id="P39217">
    <property type="interactions" value="230"/>
</dbReference>
<dbReference type="STRING" id="224308.BSU31230"/>
<dbReference type="jPOST" id="P39217"/>
<dbReference type="PaxDb" id="224308-BSU31230"/>
<dbReference type="EnsemblBacteria" id="CAB15101">
    <property type="protein sequence ID" value="CAB15101"/>
    <property type="gene ID" value="BSU_31230"/>
</dbReference>
<dbReference type="GeneID" id="937152"/>
<dbReference type="KEGG" id="bsu:BSU31230"/>
<dbReference type="PATRIC" id="fig|224308.179.peg.3383"/>
<dbReference type="eggNOG" id="COG0840">
    <property type="taxonomic scope" value="Bacteria"/>
</dbReference>
<dbReference type="InParanoid" id="P39217"/>
<dbReference type="OrthoDB" id="9760371at2"/>
<dbReference type="PhylomeDB" id="P39217"/>
<dbReference type="BioCyc" id="BSUB:BSU31230-MONOMER"/>
<dbReference type="Proteomes" id="UP000001570">
    <property type="component" value="Chromosome"/>
</dbReference>
<dbReference type="GO" id="GO:0005886">
    <property type="term" value="C:plasma membrane"/>
    <property type="evidence" value="ECO:0007669"/>
    <property type="project" value="UniProtKB-SubCell"/>
</dbReference>
<dbReference type="GO" id="GO:0006935">
    <property type="term" value="P:chemotaxis"/>
    <property type="evidence" value="ECO:0000318"/>
    <property type="project" value="GO_Central"/>
</dbReference>
<dbReference type="GO" id="GO:0007165">
    <property type="term" value="P:signal transduction"/>
    <property type="evidence" value="ECO:0007669"/>
    <property type="project" value="UniProtKB-KW"/>
</dbReference>
<dbReference type="CDD" id="cd06225">
    <property type="entry name" value="HAMP"/>
    <property type="match status" value="1"/>
</dbReference>
<dbReference type="CDD" id="cd11386">
    <property type="entry name" value="MCP_signal"/>
    <property type="match status" value="1"/>
</dbReference>
<dbReference type="CDD" id="cd18773">
    <property type="entry name" value="PDC1_HK_sensor"/>
    <property type="match status" value="1"/>
</dbReference>
<dbReference type="CDD" id="cd12912">
    <property type="entry name" value="PDC2_MCP_like"/>
    <property type="match status" value="1"/>
</dbReference>
<dbReference type="FunFam" id="1.10.287.950:FF:000001">
    <property type="entry name" value="Methyl-accepting chemotaxis sensory transducer"/>
    <property type="match status" value="1"/>
</dbReference>
<dbReference type="Gene3D" id="6.10.340.10">
    <property type="match status" value="1"/>
</dbReference>
<dbReference type="Gene3D" id="1.10.287.950">
    <property type="entry name" value="Methyl-accepting chemotaxis protein"/>
    <property type="match status" value="1"/>
</dbReference>
<dbReference type="Gene3D" id="3.30.450.20">
    <property type="entry name" value="PAS domain"/>
    <property type="match status" value="2"/>
</dbReference>
<dbReference type="InterPro" id="IPR033479">
    <property type="entry name" value="dCache_1"/>
</dbReference>
<dbReference type="InterPro" id="IPR003660">
    <property type="entry name" value="HAMP_dom"/>
</dbReference>
<dbReference type="InterPro" id="IPR004089">
    <property type="entry name" value="MCPsignal_dom"/>
</dbReference>
<dbReference type="InterPro" id="IPR029151">
    <property type="entry name" value="Sensor-like_sf"/>
</dbReference>
<dbReference type="InterPro" id="IPR003122">
    <property type="entry name" value="Tar_rcpt_lig-bd"/>
</dbReference>
<dbReference type="PANTHER" id="PTHR32089">
    <property type="entry name" value="METHYL-ACCEPTING CHEMOTAXIS PROTEIN MCPB"/>
    <property type="match status" value="1"/>
</dbReference>
<dbReference type="PANTHER" id="PTHR32089:SF114">
    <property type="entry name" value="METHYL-ACCEPTING CHEMOTAXIS PROTEIN MCPB"/>
    <property type="match status" value="1"/>
</dbReference>
<dbReference type="Pfam" id="PF02743">
    <property type="entry name" value="dCache_1"/>
    <property type="match status" value="1"/>
</dbReference>
<dbReference type="Pfam" id="PF00672">
    <property type="entry name" value="HAMP"/>
    <property type="match status" value="1"/>
</dbReference>
<dbReference type="Pfam" id="PF00015">
    <property type="entry name" value="MCPsignal"/>
    <property type="match status" value="1"/>
</dbReference>
<dbReference type="SMART" id="SM00304">
    <property type="entry name" value="HAMP"/>
    <property type="match status" value="1"/>
</dbReference>
<dbReference type="SMART" id="SM00283">
    <property type="entry name" value="MA"/>
    <property type="match status" value="1"/>
</dbReference>
<dbReference type="SMART" id="SM00319">
    <property type="entry name" value="TarH"/>
    <property type="match status" value="1"/>
</dbReference>
<dbReference type="SUPFAM" id="SSF58104">
    <property type="entry name" value="Methyl-accepting chemotaxis protein (MCP) signaling domain"/>
    <property type="match status" value="1"/>
</dbReference>
<dbReference type="SUPFAM" id="SSF103190">
    <property type="entry name" value="Sensory domain-like"/>
    <property type="match status" value="1"/>
</dbReference>
<dbReference type="PROSITE" id="PS50111">
    <property type="entry name" value="CHEMOTAXIS_TRANSDUC_2"/>
    <property type="match status" value="1"/>
</dbReference>
<dbReference type="PROSITE" id="PS50885">
    <property type="entry name" value="HAMP"/>
    <property type="match status" value="1"/>
</dbReference>
<organism>
    <name type="scientific">Bacillus subtilis (strain 168)</name>
    <dbReference type="NCBI Taxonomy" id="224308"/>
    <lineage>
        <taxon>Bacteria</taxon>
        <taxon>Bacillati</taxon>
        <taxon>Bacillota</taxon>
        <taxon>Bacilli</taxon>
        <taxon>Bacillales</taxon>
        <taxon>Bacillaceae</taxon>
        <taxon>Bacillus</taxon>
    </lineage>
</organism>
<reference key="1">
    <citation type="journal article" date="1994" name="J. Biol. Chem.">
        <title>Cloning and characterization of genes encoding methyl-accepting chemotaxis proteins in Bacillus subtilis.</title>
        <authorList>
            <person name="Hanlon D.W."/>
            <person name="Ordal G.W."/>
        </authorList>
    </citation>
    <scope>NUCLEOTIDE SEQUENCE [GENOMIC DNA]</scope>
    <source>
        <strain>168 / OI1085</strain>
    </source>
</reference>
<reference key="2">
    <citation type="journal article" date="1997" name="Nature">
        <title>The complete genome sequence of the Gram-positive bacterium Bacillus subtilis.</title>
        <authorList>
            <person name="Kunst F."/>
            <person name="Ogasawara N."/>
            <person name="Moszer I."/>
            <person name="Albertini A.M."/>
            <person name="Alloni G."/>
            <person name="Azevedo V."/>
            <person name="Bertero M.G."/>
            <person name="Bessieres P."/>
            <person name="Bolotin A."/>
            <person name="Borchert S."/>
            <person name="Borriss R."/>
            <person name="Boursier L."/>
            <person name="Brans A."/>
            <person name="Braun M."/>
            <person name="Brignell S.C."/>
            <person name="Bron S."/>
            <person name="Brouillet S."/>
            <person name="Bruschi C.V."/>
            <person name="Caldwell B."/>
            <person name="Capuano V."/>
            <person name="Carter N.M."/>
            <person name="Choi S.-K."/>
            <person name="Codani J.-J."/>
            <person name="Connerton I.F."/>
            <person name="Cummings N.J."/>
            <person name="Daniel R.A."/>
            <person name="Denizot F."/>
            <person name="Devine K.M."/>
            <person name="Duesterhoeft A."/>
            <person name="Ehrlich S.D."/>
            <person name="Emmerson P.T."/>
            <person name="Entian K.-D."/>
            <person name="Errington J."/>
            <person name="Fabret C."/>
            <person name="Ferrari E."/>
            <person name="Foulger D."/>
            <person name="Fritz C."/>
            <person name="Fujita M."/>
            <person name="Fujita Y."/>
            <person name="Fuma S."/>
            <person name="Galizzi A."/>
            <person name="Galleron N."/>
            <person name="Ghim S.-Y."/>
            <person name="Glaser P."/>
            <person name="Goffeau A."/>
            <person name="Golightly E.J."/>
            <person name="Grandi G."/>
            <person name="Guiseppi G."/>
            <person name="Guy B.J."/>
            <person name="Haga K."/>
            <person name="Haiech J."/>
            <person name="Harwood C.R."/>
            <person name="Henaut A."/>
            <person name="Hilbert H."/>
            <person name="Holsappel S."/>
            <person name="Hosono S."/>
            <person name="Hullo M.-F."/>
            <person name="Itaya M."/>
            <person name="Jones L.-M."/>
            <person name="Joris B."/>
            <person name="Karamata D."/>
            <person name="Kasahara Y."/>
            <person name="Klaerr-Blanchard M."/>
            <person name="Klein C."/>
            <person name="Kobayashi Y."/>
            <person name="Koetter P."/>
            <person name="Koningstein G."/>
            <person name="Krogh S."/>
            <person name="Kumano M."/>
            <person name="Kurita K."/>
            <person name="Lapidus A."/>
            <person name="Lardinois S."/>
            <person name="Lauber J."/>
            <person name="Lazarevic V."/>
            <person name="Lee S.-M."/>
            <person name="Levine A."/>
            <person name="Liu H."/>
            <person name="Masuda S."/>
            <person name="Mauel C."/>
            <person name="Medigue C."/>
            <person name="Medina N."/>
            <person name="Mellado R.P."/>
            <person name="Mizuno M."/>
            <person name="Moestl D."/>
            <person name="Nakai S."/>
            <person name="Noback M."/>
            <person name="Noone D."/>
            <person name="O'Reilly M."/>
            <person name="Ogawa K."/>
            <person name="Ogiwara A."/>
            <person name="Oudega B."/>
            <person name="Park S.-H."/>
            <person name="Parro V."/>
            <person name="Pohl T.M."/>
            <person name="Portetelle D."/>
            <person name="Porwollik S."/>
            <person name="Prescott A.M."/>
            <person name="Presecan E."/>
            <person name="Pujic P."/>
            <person name="Purnelle B."/>
            <person name="Rapoport G."/>
            <person name="Rey M."/>
            <person name="Reynolds S."/>
            <person name="Rieger M."/>
            <person name="Rivolta C."/>
            <person name="Rocha E."/>
            <person name="Roche B."/>
            <person name="Rose M."/>
            <person name="Sadaie Y."/>
            <person name="Sato T."/>
            <person name="Scanlan E."/>
            <person name="Schleich S."/>
            <person name="Schroeter R."/>
            <person name="Scoffone F."/>
            <person name="Sekiguchi J."/>
            <person name="Sekowska A."/>
            <person name="Seror S.J."/>
            <person name="Serror P."/>
            <person name="Shin B.-S."/>
            <person name="Soldo B."/>
            <person name="Sorokin A."/>
            <person name="Tacconi E."/>
            <person name="Takagi T."/>
            <person name="Takahashi H."/>
            <person name="Takemaru K."/>
            <person name="Takeuchi M."/>
            <person name="Tamakoshi A."/>
            <person name="Tanaka T."/>
            <person name="Terpstra P."/>
            <person name="Tognoni A."/>
            <person name="Tosato V."/>
            <person name="Uchiyama S."/>
            <person name="Vandenbol M."/>
            <person name="Vannier F."/>
            <person name="Vassarotti A."/>
            <person name="Viari A."/>
            <person name="Wambutt R."/>
            <person name="Wedler E."/>
            <person name="Wedler H."/>
            <person name="Weitzenegger T."/>
            <person name="Winters P."/>
            <person name="Wipat A."/>
            <person name="Yamamoto H."/>
            <person name="Yamane K."/>
            <person name="Yasumoto K."/>
            <person name="Yata K."/>
            <person name="Yoshida K."/>
            <person name="Yoshikawa H.-F."/>
            <person name="Zumstein E."/>
            <person name="Yoshikawa H."/>
            <person name="Danchin A."/>
        </authorList>
    </citation>
    <scope>NUCLEOTIDE SEQUENCE [LARGE SCALE GENOMIC DNA]</scope>
    <source>
        <strain>168</strain>
    </source>
</reference>
<proteinExistence type="inferred from homology"/>
<sequence length="662" mass="71536">MGKFIQWIKQPSISKPLIAAFLAVLILPVGVLAYFSYQSAWNALDRELISSAKGNVEELNSTLQNKLEDKVKAIDYYSETVDKDILLGKNKTLLKEKFKQYTTLNDDVGAIYAASEDKKLYKYPDSGVPKGFDPTGRDWYKQAVAEKGQAVFSEPYTDEATGDIVVTISKQLKDGSGVIALDLNLDEVLTASKRIKIGKEGFAFITTGNKKYIAHPTIKPGTTGSGDWTNQVYSKKEGSFEYTFEGKEKKMAFTTNKLTGWKIAGTYFVSELQDASSPVLNTAVIILCVSIVIGGILILYIIRAITKPLRKLVSTSAKISSGDLTEVIDIHSKNEFGQLGESFNEMSASLRSVIGVIQTSVENVASSSEELTASAAQTSKATEHITLAIEQFSDGNEAQSEKLETSSNHLSQMNEGISKVAQASSTITKSSIQSSEAAGSGEKLVEHTVGQMKTIDQSVQKAEAVVKGLETKSQDITSILNVINGIADQTNLLALNAAIEAARAGEYGRGFSVVAEEVRKLAVQSADSAKEIEGLIQEIVREISTSLSMFQSVNHEVKEGLQITDQTAESFKQIYEMTTQISGELQNLNATVEQLSAGSQEVSSAVEDISAVAKESSAGIQDIAASAEEQLASMEEISSSAETLANMAEELQDITKKFKIES</sequence>
<name>TLPB_BACSU</name>
<evidence type="ECO:0000250" key="1"/>
<evidence type="ECO:0000255" key="2"/>
<evidence type="ECO:0000255" key="3">
    <source>
        <dbReference type="PROSITE-ProRule" id="PRU00102"/>
    </source>
</evidence>
<evidence type="ECO:0000255" key="4">
    <source>
        <dbReference type="PROSITE-ProRule" id="PRU00284"/>
    </source>
</evidence>
<evidence type="ECO:0000305" key="5"/>
<comment type="function">
    <text>Chemotactic-signal transducers respond to changes in the concentration of attractants and repellents in the environment, transduce a signal from the outside to the inside of the cell, and facilitate sensory adaptation through the variation of the level of methylation. All amino acids serve as attractants in B.subtilis, they appear to cause an increase in the turnover methyl groups, leading to methylation of an unidentified acceptor, while repellents have been shown to cause a decrease in methyl group turnover. The methyl groups are added by a methyltransferase and removed by a methylesterase.</text>
</comment>
<comment type="subcellular location">
    <subcellularLocation>
        <location evidence="5">Cell membrane</location>
        <topology evidence="5">Multi-pass membrane protein</topology>
    </subcellularLocation>
</comment>
<comment type="similarity">
    <text evidence="5">Belongs to the methyl-accepting chemotaxis (MCP) protein family.</text>
</comment>
<keyword id="KW-1003">Cell membrane</keyword>
<keyword id="KW-0145">Chemotaxis</keyword>
<keyword id="KW-0472">Membrane</keyword>
<keyword id="KW-0488">Methylation</keyword>
<keyword id="KW-1185">Reference proteome</keyword>
<keyword id="KW-0807">Transducer</keyword>
<keyword id="KW-0812">Transmembrane</keyword>
<keyword id="KW-1133">Transmembrane helix</keyword>